<keyword id="KW-0903">Direct protein sequencing</keyword>
<keyword id="KW-0408">Iron</keyword>
<keyword id="KW-0409">Iron storage</keyword>
<keyword id="KW-0479">Metal-binding</keyword>
<keyword id="KW-0560">Oxidoreductase</keyword>
<sequence length="176" mass="20436">MDSQVRQNYHRDCEAAVNRMINMELFASYSYTSMAFYFSRDDVALPGFAHFFKENSDEEREHADKLLTFQNSRGGRIFLQDIKKPERDEWGSGLDALQSSLQLEKNVNQALLDLHKIASDHTDPHMCDFLETHYLNEQVESIKKLGDFITNLSRMDAVKNKMAEYLFDKHTMGGKN</sequence>
<dbReference type="EC" id="1.16.3.1"/>
<dbReference type="SMR" id="P85836"/>
<dbReference type="GO" id="GO:0005737">
    <property type="term" value="C:cytoplasm"/>
    <property type="evidence" value="ECO:0007669"/>
    <property type="project" value="TreeGrafter"/>
</dbReference>
<dbReference type="GO" id="GO:0008199">
    <property type="term" value="F:ferric iron binding"/>
    <property type="evidence" value="ECO:0007669"/>
    <property type="project" value="InterPro"/>
</dbReference>
<dbReference type="GO" id="GO:0008198">
    <property type="term" value="F:ferrous iron binding"/>
    <property type="evidence" value="ECO:0007669"/>
    <property type="project" value="TreeGrafter"/>
</dbReference>
<dbReference type="GO" id="GO:0004322">
    <property type="term" value="F:ferroxidase activity"/>
    <property type="evidence" value="ECO:0007669"/>
    <property type="project" value="UniProtKB-EC"/>
</dbReference>
<dbReference type="GO" id="GO:0006879">
    <property type="term" value="P:intracellular iron ion homeostasis"/>
    <property type="evidence" value="ECO:0007669"/>
    <property type="project" value="UniProtKB-KW"/>
</dbReference>
<dbReference type="GO" id="GO:0006826">
    <property type="term" value="P:iron ion transport"/>
    <property type="evidence" value="ECO:0007669"/>
    <property type="project" value="InterPro"/>
</dbReference>
<dbReference type="CDD" id="cd01056">
    <property type="entry name" value="Euk_Ferritin"/>
    <property type="match status" value="1"/>
</dbReference>
<dbReference type="FunFam" id="1.20.1260.10:FF:000002">
    <property type="entry name" value="Ferritin, mitochondrial"/>
    <property type="match status" value="1"/>
</dbReference>
<dbReference type="Gene3D" id="1.20.1260.10">
    <property type="match status" value="1"/>
</dbReference>
<dbReference type="InterPro" id="IPR001519">
    <property type="entry name" value="Ferritin"/>
</dbReference>
<dbReference type="InterPro" id="IPR012347">
    <property type="entry name" value="Ferritin-like"/>
</dbReference>
<dbReference type="InterPro" id="IPR009040">
    <property type="entry name" value="Ferritin-like_diiron"/>
</dbReference>
<dbReference type="InterPro" id="IPR009078">
    <property type="entry name" value="Ferritin-like_SF"/>
</dbReference>
<dbReference type="InterPro" id="IPR014034">
    <property type="entry name" value="Ferritin_CS"/>
</dbReference>
<dbReference type="InterPro" id="IPR008331">
    <property type="entry name" value="Ferritin_DPS_dom"/>
</dbReference>
<dbReference type="PANTHER" id="PTHR11431">
    <property type="entry name" value="FERRITIN"/>
    <property type="match status" value="1"/>
</dbReference>
<dbReference type="PANTHER" id="PTHR11431:SF54">
    <property type="entry name" value="FERRITIN"/>
    <property type="match status" value="1"/>
</dbReference>
<dbReference type="Pfam" id="PF00210">
    <property type="entry name" value="Ferritin"/>
    <property type="match status" value="1"/>
</dbReference>
<dbReference type="SUPFAM" id="SSF47240">
    <property type="entry name" value="Ferritin-like"/>
    <property type="match status" value="1"/>
</dbReference>
<dbReference type="PROSITE" id="PS00204">
    <property type="entry name" value="FERRITIN_2"/>
    <property type="match status" value="1"/>
</dbReference>
<dbReference type="PROSITE" id="PS50905">
    <property type="entry name" value="FERRITIN_LIKE"/>
    <property type="match status" value="1"/>
</dbReference>
<reference evidence="6" key="1">
    <citation type="journal article" date="2008" name="Arch. Biochem. Biophys.">
        <title>The unusual co-assembly of H- and M-chains in the ferritin molecule from the Antarctic teleosts Trematomus bernacchii and Trematomus newnesi.</title>
        <authorList>
            <person name="Giorgi A."/>
            <person name="Mignogna G."/>
            <person name="Bellapadrona G."/>
            <person name="Gattoni M."/>
            <person name="Chiaraluce R."/>
            <person name="Consalvi V."/>
            <person name="Chiancone E."/>
            <person name="Stefanini S."/>
        </authorList>
    </citation>
    <scope>PROTEIN SEQUENCE</scope>
    <scope>CATALYTIC ACTIVITY</scope>
    <scope>SUBUNIT</scope>
    <scope>TISSUE SPECIFICITY</scope>
    <source>
        <tissue evidence="4">Liver</tissue>
    </source>
</reference>
<comment type="function">
    <text evidence="1">Stores iron in a soluble, non-toxic, readily available form. Important for iron homeostasis. Has ferroxidase activity. Iron is taken up in the ferrous form and deposited as ferric hydroxides after oxidation (By similarity).</text>
</comment>
<comment type="catalytic activity">
    <reaction evidence="4">
        <text>4 Fe(2+) + O2 + 4 H(+) = 4 Fe(3+) + 2 H2O</text>
        <dbReference type="Rhea" id="RHEA:11148"/>
        <dbReference type="ChEBI" id="CHEBI:15377"/>
        <dbReference type="ChEBI" id="CHEBI:15378"/>
        <dbReference type="ChEBI" id="CHEBI:15379"/>
        <dbReference type="ChEBI" id="CHEBI:29033"/>
        <dbReference type="ChEBI" id="CHEBI:29034"/>
        <dbReference type="EC" id="1.16.3.1"/>
    </reaction>
</comment>
<comment type="subunit">
    <text evidence="4 6">In liver, forms a heteromer consisting of middle and heavy subunits. The functional molecule forms a roughly spherical shell with a diameter of 12 nm and contains a central cavity into which the insoluble mineral iron core is deposited.</text>
</comment>
<comment type="tissue specificity">
    <text evidence="4">Liver (at protein level).</text>
</comment>
<comment type="similarity">
    <text evidence="2">Belongs to the ferritin family.</text>
</comment>
<proteinExistence type="evidence at protein level"/>
<organism>
    <name type="scientific">Trematomus bernacchii</name>
    <name type="common">Emerald rockcod</name>
    <name type="synonym">Pseudotrematomus bernacchii</name>
    <dbReference type="NCBI Taxonomy" id="40690"/>
    <lineage>
        <taxon>Eukaryota</taxon>
        <taxon>Metazoa</taxon>
        <taxon>Chordata</taxon>
        <taxon>Craniata</taxon>
        <taxon>Vertebrata</taxon>
        <taxon>Euteleostomi</taxon>
        <taxon>Actinopterygii</taxon>
        <taxon>Neopterygii</taxon>
        <taxon>Teleostei</taxon>
        <taxon>Neoteleostei</taxon>
        <taxon>Acanthomorphata</taxon>
        <taxon>Eupercaria</taxon>
        <taxon>Perciformes</taxon>
        <taxon>Notothenioidei</taxon>
        <taxon>Nototheniidae</taxon>
        <taxon>Trematomus</taxon>
    </lineage>
</organism>
<evidence type="ECO:0000250" key="1">
    <source>
        <dbReference type="UniProtKB" id="P07798"/>
    </source>
</evidence>
<evidence type="ECO:0000255" key="2"/>
<evidence type="ECO:0000255" key="3">
    <source>
        <dbReference type="PROSITE-ProRule" id="PRU00085"/>
    </source>
</evidence>
<evidence type="ECO:0000269" key="4">
    <source>
    </source>
</evidence>
<evidence type="ECO:0000303" key="5">
    <source>
    </source>
</evidence>
<evidence type="ECO:0000305" key="6"/>
<accession>P85836</accession>
<name>FRIML_TREBE</name>
<protein>
    <recommendedName>
        <fullName evidence="5">Ferritin, liver middle subunit</fullName>
        <shortName evidence="5">Ferritin M</shortName>
        <ecNumber>1.16.3.1</ecNumber>
    </recommendedName>
</protein>
<feature type="chain" id="PRO_0000352782" description="Ferritin, liver middle subunit">
    <location>
        <begin position="1"/>
        <end position="176"/>
    </location>
</feature>
<feature type="domain" description="Ferritin-like diiron" evidence="3">
    <location>
        <begin position="7"/>
        <end position="156"/>
    </location>
</feature>
<feature type="binding site" evidence="1 3">
    <location>
        <position position="24"/>
    </location>
    <ligand>
        <name>Fe cation</name>
        <dbReference type="ChEBI" id="CHEBI:24875"/>
        <label>1</label>
    </ligand>
</feature>
<feature type="binding site" evidence="1 3">
    <location>
        <position position="59"/>
    </location>
    <ligand>
        <name>Fe cation</name>
        <dbReference type="ChEBI" id="CHEBI:24875"/>
        <label>1</label>
    </ligand>
</feature>
<feature type="binding site" evidence="1 3">
    <location>
        <position position="59"/>
    </location>
    <ligand>
        <name>Fe cation</name>
        <dbReference type="ChEBI" id="CHEBI:24875"/>
        <label>2</label>
    </ligand>
</feature>
<feature type="binding site" evidence="1 3">
    <location>
        <position position="62"/>
    </location>
    <ligand>
        <name>Fe cation</name>
        <dbReference type="ChEBI" id="CHEBI:24875"/>
        <label>1</label>
    </ligand>
</feature>
<feature type="binding site" evidence="1 3">
    <location>
        <position position="104"/>
    </location>
    <ligand>
        <name>Fe cation</name>
        <dbReference type="ChEBI" id="CHEBI:24875"/>
        <label>2</label>
    </ligand>
</feature>
<feature type="binding site" evidence="1 3">
    <location>
        <position position="138"/>
    </location>
    <ligand>
        <name>Fe cation</name>
        <dbReference type="ChEBI" id="CHEBI:24875"/>
        <label>2</label>
    </ligand>
</feature>